<feature type="chain" id="PRO_1000204516" description="ATP-dependent protease subunit HslV">
    <location>
        <begin position="1"/>
        <end position="180"/>
    </location>
</feature>
<feature type="active site" evidence="1">
    <location>
        <position position="2"/>
    </location>
</feature>
<feature type="binding site" evidence="1">
    <location>
        <position position="157"/>
    </location>
    <ligand>
        <name>Na(+)</name>
        <dbReference type="ChEBI" id="CHEBI:29101"/>
    </ligand>
</feature>
<feature type="binding site" evidence="1">
    <location>
        <position position="160"/>
    </location>
    <ligand>
        <name>Na(+)</name>
        <dbReference type="ChEBI" id="CHEBI:29101"/>
    </ligand>
</feature>
<feature type="binding site" evidence="1">
    <location>
        <position position="163"/>
    </location>
    <ligand>
        <name>Na(+)</name>
        <dbReference type="ChEBI" id="CHEBI:29101"/>
    </ligand>
</feature>
<organism>
    <name type="scientific">Tolumonas auensis (strain DSM 9187 / NBRC 110442 / TA 4)</name>
    <dbReference type="NCBI Taxonomy" id="595494"/>
    <lineage>
        <taxon>Bacteria</taxon>
        <taxon>Pseudomonadati</taxon>
        <taxon>Pseudomonadota</taxon>
        <taxon>Gammaproteobacteria</taxon>
        <taxon>Aeromonadales</taxon>
        <taxon>Aeromonadaceae</taxon>
        <taxon>Tolumonas</taxon>
    </lineage>
</organism>
<proteinExistence type="inferred from homology"/>
<gene>
    <name evidence="1" type="primary">hslV</name>
    <name type="ordered locus">Tola_0470</name>
</gene>
<evidence type="ECO:0000255" key="1">
    <source>
        <dbReference type="HAMAP-Rule" id="MF_00248"/>
    </source>
</evidence>
<sequence>MTTIVSVRRNGQVVIGGDGQVSLGNTVMKGNARKVHRLYNGKVLAGFAGGTADAFTLLERFEAKLQAHQGNLERAAVALAKEWRTDRALRRLEALLAVADAQRSFIITGNGDVVQPENDLIAIGSGGAFAQSAARALLENTELSAEEIVKKALTIAGDICVFTNSFHTIEVLEYPTVTPV</sequence>
<comment type="function">
    <text evidence="1">Protease subunit of a proteasome-like degradation complex believed to be a general protein degrading machinery.</text>
</comment>
<comment type="catalytic activity">
    <reaction evidence="1">
        <text>ATP-dependent cleavage of peptide bonds with broad specificity.</text>
        <dbReference type="EC" id="3.4.25.2"/>
    </reaction>
</comment>
<comment type="activity regulation">
    <text evidence="1">Allosterically activated by HslU binding.</text>
</comment>
<comment type="subunit">
    <text evidence="1">A double ring-shaped homohexamer of HslV is capped on each side by a ring-shaped HslU homohexamer. The assembly of the HslU/HslV complex is dependent on binding of ATP.</text>
</comment>
<comment type="subcellular location">
    <subcellularLocation>
        <location evidence="1">Cytoplasm</location>
    </subcellularLocation>
</comment>
<comment type="similarity">
    <text evidence="1">Belongs to the peptidase T1B family. HslV subfamily.</text>
</comment>
<name>HSLV_TOLAT</name>
<dbReference type="EC" id="3.4.25.2" evidence="1"/>
<dbReference type="EMBL" id="CP001616">
    <property type="protein sequence ID" value="ACQ92099.1"/>
    <property type="molecule type" value="Genomic_DNA"/>
</dbReference>
<dbReference type="RefSeq" id="WP_012728698.1">
    <property type="nucleotide sequence ID" value="NC_012691.1"/>
</dbReference>
<dbReference type="SMR" id="C4L9X0"/>
<dbReference type="STRING" id="595494.Tola_0470"/>
<dbReference type="MEROPS" id="T01.006"/>
<dbReference type="KEGG" id="tau:Tola_0470"/>
<dbReference type="eggNOG" id="COG5405">
    <property type="taxonomic scope" value="Bacteria"/>
</dbReference>
<dbReference type="HOGENOM" id="CLU_093872_1_0_6"/>
<dbReference type="OrthoDB" id="9804884at2"/>
<dbReference type="Proteomes" id="UP000009073">
    <property type="component" value="Chromosome"/>
</dbReference>
<dbReference type="GO" id="GO:0009376">
    <property type="term" value="C:HslUV protease complex"/>
    <property type="evidence" value="ECO:0007669"/>
    <property type="project" value="UniProtKB-UniRule"/>
</dbReference>
<dbReference type="GO" id="GO:0005839">
    <property type="term" value="C:proteasome core complex"/>
    <property type="evidence" value="ECO:0007669"/>
    <property type="project" value="InterPro"/>
</dbReference>
<dbReference type="GO" id="GO:0046872">
    <property type="term" value="F:metal ion binding"/>
    <property type="evidence" value="ECO:0007669"/>
    <property type="project" value="UniProtKB-KW"/>
</dbReference>
<dbReference type="GO" id="GO:0004298">
    <property type="term" value="F:threonine-type endopeptidase activity"/>
    <property type="evidence" value="ECO:0007669"/>
    <property type="project" value="UniProtKB-KW"/>
</dbReference>
<dbReference type="GO" id="GO:0051603">
    <property type="term" value="P:proteolysis involved in protein catabolic process"/>
    <property type="evidence" value="ECO:0007669"/>
    <property type="project" value="InterPro"/>
</dbReference>
<dbReference type="CDD" id="cd01913">
    <property type="entry name" value="protease_HslV"/>
    <property type="match status" value="1"/>
</dbReference>
<dbReference type="FunFam" id="3.60.20.10:FF:000002">
    <property type="entry name" value="ATP-dependent protease subunit HslV"/>
    <property type="match status" value="1"/>
</dbReference>
<dbReference type="Gene3D" id="3.60.20.10">
    <property type="entry name" value="Glutamine Phosphoribosylpyrophosphate, subunit 1, domain 1"/>
    <property type="match status" value="1"/>
</dbReference>
<dbReference type="HAMAP" id="MF_00248">
    <property type="entry name" value="HslV"/>
    <property type="match status" value="1"/>
</dbReference>
<dbReference type="InterPro" id="IPR022281">
    <property type="entry name" value="ATP-dep_Prtase_HsIV_su"/>
</dbReference>
<dbReference type="InterPro" id="IPR029055">
    <property type="entry name" value="Ntn_hydrolases_N"/>
</dbReference>
<dbReference type="InterPro" id="IPR001353">
    <property type="entry name" value="Proteasome_sua/b"/>
</dbReference>
<dbReference type="InterPro" id="IPR023333">
    <property type="entry name" value="Proteasome_suB-type"/>
</dbReference>
<dbReference type="NCBIfam" id="TIGR03692">
    <property type="entry name" value="ATP_dep_HslV"/>
    <property type="match status" value="1"/>
</dbReference>
<dbReference type="NCBIfam" id="NF003964">
    <property type="entry name" value="PRK05456.1"/>
    <property type="match status" value="1"/>
</dbReference>
<dbReference type="PANTHER" id="PTHR32194:SF0">
    <property type="entry name" value="ATP-DEPENDENT PROTEASE SUBUNIT HSLV"/>
    <property type="match status" value="1"/>
</dbReference>
<dbReference type="PANTHER" id="PTHR32194">
    <property type="entry name" value="METALLOPROTEASE TLDD"/>
    <property type="match status" value="1"/>
</dbReference>
<dbReference type="Pfam" id="PF00227">
    <property type="entry name" value="Proteasome"/>
    <property type="match status" value="1"/>
</dbReference>
<dbReference type="PIRSF" id="PIRSF039093">
    <property type="entry name" value="HslV"/>
    <property type="match status" value="1"/>
</dbReference>
<dbReference type="SUPFAM" id="SSF56235">
    <property type="entry name" value="N-terminal nucleophile aminohydrolases (Ntn hydrolases)"/>
    <property type="match status" value="1"/>
</dbReference>
<dbReference type="PROSITE" id="PS51476">
    <property type="entry name" value="PROTEASOME_BETA_2"/>
    <property type="match status" value="1"/>
</dbReference>
<keyword id="KW-0021">Allosteric enzyme</keyword>
<keyword id="KW-0963">Cytoplasm</keyword>
<keyword id="KW-0378">Hydrolase</keyword>
<keyword id="KW-0479">Metal-binding</keyword>
<keyword id="KW-0645">Protease</keyword>
<keyword id="KW-1185">Reference proteome</keyword>
<keyword id="KW-0915">Sodium</keyword>
<keyword id="KW-0888">Threonine protease</keyword>
<protein>
    <recommendedName>
        <fullName evidence="1">ATP-dependent protease subunit HslV</fullName>
        <ecNumber evidence="1">3.4.25.2</ecNumber>
    </recommendedName>
</protein>
<accession>C4L9X0</accession>
<reference key="1">
    <citation type="submission" date="2009-05" db="EMBL/GenBank/DDBJ databases">
        <title>Complete sequence of Tolumonas auensis DSM 9187.</title>
        <authorList>
            <consortium name="US DOE Joint Genome Institute"/>
            <person name="Lucas S."/>
            <person name="Copeland A."/>
            <person name="Lapidus A."/>
            <person name="Glavina del Rio T."/>
            <person name="Tice H."/>
            <person name="Bruce D."/>
            <person name="Goodwin L."/>
            <person name="Pitluck S."/>
            <person name="Chertkov O."/>
            <person name="Brettin T."/>
            <person name="Detter J.C."/>
            <person name="Han C."/>
            <person name="Larimer F."/>
            <person name="Land M."/>
            <person name="Hauser L."/>
            <person name="Kyrpides N."/>
            <person name="Mikhailova N."/>
            <person name="Spring S."/>
            <person name="Beller H."/>
        </authorList>
    </citation>
    <scope>NUCLEOTIDE SEQUENCE [LARGE SCALE GENOMIC DNA]</scope>
    <source>
        <strain>DSM 9187 / NBRC 110442 / TA 4</strain>
    </source>
</reference>